<accession>Q63QG7</accession>
<name>AZOR_BURPS</name>
<reference key="1">
    <citation type="journal article" date="2004" name="Proc. Natl. Acad. Sci. U.S.A.">
        <title>Genomic plasticity of the causative agent of melioidosis, Burkholderia pseudomallei.</title>
        <authorList>
            <person name="Holden M.T.G."/>
            <person name="Titball R.W."/>
            <person name="Peacock S.J."/>
            <person name="Cerdeno-Tarraga A.-M."/>
            <person name="Atkins T."/>
            <person name="Crossman L.C."/>
            <person name="Pitt T."/>
            <person name="Churcher C."/>
            <person name="Mungall K.L."/>
            <person name="Bentley S.D."/>
            <person name="Sebaihia M."/>
            <person name="Thomson N.R."/>
            <person name="Bason N."/>
            <person name="Beacham I.R."/>
            <person name="Brooks K."/>
            <person name="Brown K.A."/>
            <person name="Brown N.F."/>
            <person name="Challis G.L."/>
            <person name="Cherevach I."/>
            <person name="Chillingworth T."/>
            <person name="Cronin A."/>
            <person name="Crossett B."/>
            <person name="Davis P."/>
            <person name="DeShazer D."/>
            <person name="Feltwell T."/>
            <person name="Fraser A."/>
            <person name="Hance Z."/>
            <person name="Hauser H."/>
            <person name="Holroyd S."/>
            <person name="Jagels K."/>
            <person name="Keith K.E."/>
            <person name="Maddison M."/>
            <person name="Moule S."/>
            <person name="Price C."/>
            <person name="Quail M.A."/>
            <person name="Rabbinowitsch E."/>
            <person name="Rutherford K."/>
            <person name="Sanders M."/>
            <person name="Simmonds M."/>
            <person name="Songsivilai S."/>
            <person name="Stevens K."/>
            <person name="Tumapa S."/>
            <person name="Vesaratchavest M."/>
            <person name="Whitehead S."/>
            <person name="Yeats C."/>
            <person name="Barrell B.G."/>
            <person name="Oyston P.C.F."/>
            <person name="Parkhill J."/>
        </authorList>
    </citation>
    <scope>NUCLEOTIDE SEQUENCE [LARGE SCALE GENOMIC DNA]</scope>
    <source>
        <strain>K96243</strain>
    </source>
</reference>
<sequence length="198" mass="20862">MTTILQINSAARSQGAQSTLLADELTAKLQQGNPGATVKVRNLLADALPHLDDAVLGAFFTPADQRSAEQNAIVAKSDELVDELRSADVIVIGAPMYNFGVSSQLKAYFDWIARAGVTFRYTSEGPEGLIKGKKAYVVSARGGKHVGMPTDSQTPFLKTFLGFIGLTDVTFVYAEGLALGPDAATEALASAREAIAAV</sequence>
<organism>
    <name type="scientific">Burkholderia pseudomallei (strain K96243)</name>
    <dbReference type="NCBI Taxonomy" id="272560"/>
    <lineage>
        <taxon>Bacteria</taxon>
        <taxon>Pseudomonadati</taxon>
        <taxon>Pseudomonadota</taxon>
        <taxon>Betaproteobacteria</taxon>
        <taxon>Burkholderiales</taxon>
        <taxon>Burkholderiaceae</taxon>
        <taxon>Burkholderia</taxon>
        <taxon>pseudomallei group</taxon>
    </lineage>
</organism>
<comment type="function">
    <text evidence="1">Quinone reductase that provides resistance to thiol-specific stress caused by electrophilic quinones.</text>
</comment>
<comment type="function">
    <text evidence="1">Also exhibits azoreductase activity. Catalyzes the reductive cleavage of the azo bond in aromatic azo compounds to the corresponding amines.</text>
</comment>
<comment type="catalytic activity">
    <reaction evidence="1">
        <text>2 a quinone + NADH + H(+) = 2 a 1,4-benzosemiquinone + NAD(+)</text>
        <dbReference type="Rhea" id="RHEA:65952"/>
        <dbReference type="ChEBI" id="CHEBI:15378"/>
        <dbReference type="ChEBI" id="CHEBI:57540"/>
        <dbReference type="ChEBI" id="CHEBI:57945"/>
        <dbReference type="ChEBI" id="CHEBI:132124"/>
        <dbReference type="ChEBI" id="CHEBI:134225"/>
    </reaction>
</comment>
<comment type="catalytic activity">
    <reaction evidence="1">
        <text>N,N-dimethyl-1,4-phenylenediamine + anthranilate + 2 NAD(+) = 2-(4-dimethylaminophenyl)diazenylbenzoate + 2 NADH + 2 H(+)</text>
        <dbReference type="Rhea" id="RHEA:55872"/>
        <dbReference type="ChEBI" id="CHEBI:15378"/>
        <dbReference type="ChEBI" id="CHEBI:15783"/>
        <dbReference type="ChEBI" id="CHEBI:16567"/>
        <dbReference type="ChEBI" id="CHEBI:57540"/>
        <dbReference type="ChEBI" id="CHEBI:57945"/>
        <dbReference type="ChEBI" id="CHEBI:71579"/>
        <dbReference type="EC" id="1.7.1.17"/>
    </reaction>
</comment>
<comment type="cofactor">
    <cofactor evidence="1">
        <name>FMN</name>
        <dbReference type="ChEBI" id="CHEBI:58210"/>
    </cofactor>
    <text evidence="1">Binds 1 FMN per subunit.</text>
</comment>
<comment type="subunit">
    <text evidence="1">Homodimer.</text>
</comment>
<comment type="similarity">
    <text evidence="1">Belongs to the azoreductase type 1 family.</text>
</comment>
<proteinExistence type="inferred from homology"/>
<feature type="chain" id="PRO_0000245899" description="FMN-dependent NADH:quinone oxidoreductase">
    <location>
        <begin position="1"/>
        <end position="198"/>
    </location>
</feature>
<feature type="binding site" evidence="1">
    <location>
        <begin position="96"/>
        <end position="99"/>
    </location>
    <ligand>
        <name>FMN</name>
        <dbReference type="ChEBI" id="CHEBI:58210"/>
    </ligand>
</feature>
<dbReference type="EC" id="1.6.5.-" evidence="1"/>
<dbReference type="EC" id="1.7.1.17" evidence="1"/>
<dbReference type="EMBL" id="BX571965">
    <property type="protein sequence ID" value="CAH37067.1"/>
    <property type="molecule type" value="Genomic_DNA"/>
</dbReference>
<dbReference type="RefSeq" id="WP_004549943.1">
    <property type="nucleotide sequence ID" value="NZ_CP009538.1"/>
</dbReference>
<dbReference type="RefSeq" id="YP_109651.1">
    <property type="nucleotide sequence ID" value="NC_006350.1"/>
</dbReference>
<dbReference type="SMR" id="Q63QG7"/>
<dbReference type="STRING" id="272560.BPSL3056"/>
<dbReference type="KEGG" id="bps:BPSL3056"/>
<dbReference type="PATRIC" id="fig|272560.51.peg.2209"/>
<dbReference type="eggNOG" id="COG1182">
    <property type="taxonomic scope" value="Bacteria"/>
</dbReference>
<dbReference type="Proteomes" id="UP000000605">
    <property type="component" value="Chromosome 1"/>
</dbReference>
<dbReference type="GO" id="GO:0009055">
    <property type="term" value="F:electron transfer activity"/>
    <property type="evidence" value="ECO:0007669"/>
    <property type="project" value="UniProtKB-UniRule"/>
</dbReference>
<dbReference type="GO" id="GO:0010181">
    <property type="term" value="F:FMN binding"/>
    <property type="evidence" value="ECO:0007669"/>
    <property type="project" value="UniProtKB-UniRule"/>
</dbReference>
<dbReference type="GO" id="GO:0016652">
    <property type="term" value="F:oxidoreductase activity, acting on NAD(P)H as acceptor"/>
    <property type="evidence" value="ECO:0007669"/>
    <property type="project" value="UniProtKB-UniRule"/>
</dbReference>
<dbReference type="GO" id="GO:0016655">
    <property type="term" value="F:oxidoreductase activity, acting on NAD(P)H, quinone or similar compound as acceptor"/>
    <property type="evidence" value="ECO:0007669"/>
    <property type="project" value="InterPro"/>
</dbReference>
<dbReference type="Gene3D" id="3.40.50.360">
    <property type="match status" value="1"/>
</dbReference>
<dbReference type="HAMAP" id="MF_01216">
    <property type="entry name" value="Azoreductase_type1"/>
    <property type="match status" value="1"/>
</dbReference>
<dbReference type="InterPro" id="IPR003680">
    <property type="entry name" value="Flavodoxin_fold"/>
</dbReference>
<dbReference type="InterPro" id="IPR029039">
    <property type="entry name" value="Flavoprotein-like_sf"/>
</dbReference>
<dbReference type="InterPro" id="IPR050104">
    <property type="entry name" value="FMN-dep_NADH:Q_OxRdtase_AzoR1"/>
</dbReference>
<dbReference type="InterPro" id="IPR023048">
    <property type="entry name" value="NADH:quinone_OxRdtase_FMN_depd"/>
</dbReference>
<dbReference type="PANTHER" id="PTHR43741">
    <property type="entry name" value="FMN-DEPENDENT NADH-AZOREDUCTASE 1"/>
    <property type="match status" value="1"/>
</dbReference>
<dbReference type="PANTHER" id="PTHR43741:SF2">
    <property type="entry name" value="FMN-DEPENDENT NADH:QUINONE OXIDOREDUCTASE"/>
    <property type="match status" value="1"/>
</dbReference>
<dbReference type="Pfam" id="PF02525">
    <property type="entry name" value="Flavodoxin_2"/>
    <property type="match status" value="1"/>
</dbReference>
<dbReference type="SUPFAM" id="SSF52218">
    <property type="entry name" value="Flavoproteins"/>
    <property type="match status" value="1"/>
</dbReference>
<protein>
    <recommendedName>
        <fullName evidence="1">FMN-dependent NADH:quinone oxidoreductase</fullName>
        <ecNumber evidence="1">1.6.5.-</ecNumber>
    </recommendedName>
    <alternativeName>
        <fullName evidence="1">Azo-dye reductase</fullName>
    </alternativeName>
    <alternativeName>
        <fullName evidence="1">FMN-dependent NADH-azo compound oxidoreductase</fullName>
    </alternativeName>
    <alternativeName>
        <fullName evidence="1">FMN-dependent NADH-azoreductase</fullName>
        <ecNumber evidence="1">1.7.1.17</ecNumber>
    </alternativeName>
</protein>
<gene>
    <name evidence="1" type="primary">azoR</name>
    <name type="ordered locus">BPSL3056</name>
</gene>
<evidence type="ECO:0000255" key="1">
    <source>
        <dbReference type="HAMAP-Rule" id="MF_01216"/>
    </source>
</evidence>
<keyword id="KW-0285">Flavoprotein</keyword>
<keyword id="KW-0288">FMN</keyword>
<keyword id="KW-0520">NAD</keyword>
<keyword id="KW-0560">Oxidoreductase</keyword>
<keyword id="KW-1185">Reference proteome</keyword>